<protein>
    <recommendedName>
        <fullName evidence="1">Small ribosomal subunit protein bS16</fullName>
    </recommendedName>
    <alternativeName>
        <fullName evidence="3">30S ribosomal protein S16</fullName>
    </alternativeName>
</protein>
<dbReference type="EMBL" id="CP000123">
    <property type="protein sequence ID" value="ABC01605.1"/>
    <property type="molecule type" value="Genomic_DNA"/>
</dbReference>
<dbReference type="RefSeq" id="WP_011387416.1">
    <property type="nucleotide sequence ID" value="NC_007633.1"/>
</dbReference>
<dbReference type="SMR" id="Q2SRU5"/>
<dbReference type="GeneID" id="23778496"/>
<dbReference type="KEGG" id="mcp:MCAP_0547"/>
<dbReference type="HOGENOM" id="CLU_100590_5_2_14"/>
<dbReference type="PhylomeDB" id="Q2SRU5"/>
<dbReference type="Proteomes" id="UP000001928">
    <property type="component" value="Chromosome"/>
</dbReference>
<dbReference type="GO" id="GO:0005737">
    <property type="term" value="C:cytoplasm"/>
    <property type="evidence" value="ECO:0007669"/>
    <property type="project" value="UniProtKB-ARBA"/>
</dbReference>
<dbReference type="GO" id="GO:0015935">
    <property type="term" value="C:small ribosomal subunit"/>
    <property type="evidence" value="ECO:0007669"/>
    <property type="project" value="TreeGrafter"/>
</dbReference>
<dbReference type="GO" id="GO:0003735">
    <property type="term" value="F:structural constituent of ribosome"/>
    <property type="evidence" value="ECO:0007669"/>
    <property type="project" value="InterPro"/>
</dbReference>
<dbReference type="GO" id="GO:0006412">
    <property type="term" value="P:translation"/>
    <property type="evidence" value="ECO:0007669"/>
    <property type="project" value="UniProtKB-UniRule"/>
</dbReference>
<dbReference type="Gene3D" id="3.30.1320.10">
    <property type="match status" value="1"/>
</dbReference>
<dbReference type="HAMAP" id="MF_00385">
    <property type="entry name" value="Ribosomal_bS16"/>
    <property type="match status" value="1"/>
</dbReference>
<dbReference type="InterPro" id="IPR000307">
    <property type="entry name" value="Ribosomal_bS16"/>
</dbReference>
<dbReference type="InterPro" id="IPR020592">
    <property type="entry name" value="Ribosomal_bS16_CS"/>
</dbReference>
<dbReference type="InterPro" id="IPR023803">
    <property type="entry name" value="Ribosomal_bS16_dom_sf"/>
</dbReference>
<dbReference type="NCBIfam" id="TIGR00002">
    <property type="entry name" value="S16"/>
    <property type="match status" value="1"/>
</dbReference>
<dbReference type="PANTHER" id="PTHR12919">
    <property type="entry name" value="30S RIBOSOMAL PROTEIN S16"/>
    <property type="match status" value="1"/>
</dbReference>
<dbReference type="PANTHER" id="PTHR12919:SF20">
    <property type="entry name" value="SMALL RIBOSOMAL SUBUNIT PROTEIN BS16M"/>
    <property type="match status" value="1"/>
</dbReference>
<dbReference type="Pfam" id="PF00886">
    <property type="entry name" value="Ribosomal_S16"/>
    <property type="match status" value="1"/>
</dbReference>
<dbReference type="SUPFAM" id="SSF54565">
    <property type="entry name" value="Ribosomal protein S16"/>
    <property type="match status" value="1"/>
</dbReference>
<dbReference type="PROSITE" id="PS00732">
    <property type="entry name" value="RIBOSOMAL_S16"/>
    <property type="match status" value="1"/>
</dbReference>
<proteinExistence type="inferred from homology"/>
<sequence length="108" mass="12339">MVKLRLKRIGKKQAPFYRIVAADSRVNRNGQYIELVGTFNPLKDEVKIDKELTLKWLNNGAQPTDTVRSLLSKQGILKALHESKFSKNTQTENKKPVSKKTTKKSKDN</sequence>
<keyword id="KW-0687">Ribonucleoprotein</keyword>
<keyword id="KW-0689">Ribosomal protein</keyword>
<gene>
    <name evidence="1" type="primary">rpsP</name>
    <name type="ordered locus">MCAP_0547</name>
</gene>
<feature type="chain" id="PRO_0000243827" description="Small ribosomal subunit protein bS16">
    <location>
        <begin position="1"/>
        <end position="108"/>
    </location>
</feature>
<feature type="region of interest" description="Disordered" evidence="2">
    <location>
        <begin position="82"/>
        <end position="108"/>
    </location>
</feature>
<feature type="compositionally biased region" description="Basic residues" evidence="2">
    <location>
        <begin position="96"/>
        <end position="108"/>
    </location>
</feature>
<name>RS16_MYCCT</name>
<organism>
    <name type="scientific">Mycoplasma capricolum subsp. capricolum (strain California kid / ATCC 27343 / NCTC 10154)</name>
    <dbReference type="NCBI Taxonomy" id="340047"/>
    <lineage>
        <taxon>Bacteria</taxon>
        <taxon>Bacillati</taxon>
        <taxon>Mycoplasmatota</taxon>
        <taxon>Mollicutes</taxon>
        <taxon>Mycoplasmataceae</taxon>
        <taxon>Mycoplasma</taxon>
    </lineage>
</organism>
<evidence type="ECO:0000255" key="1">
    <source>
        <dbReference type="HAMAP-Rule" id="MF_00385"/>
    </source>
</evidence>
<evidence type="ECO:0000256" key="2">
    <source>
        <dbReference type="SAM" id="MobiDB-lite"/>
    </source>
</evidence>
<evidence type="ECO:0000305" key="3"/>
<reference key="1">
    <citation type="submission" date="2005-09" db="EMBL/GenBank/DDBJ databases">
        <authorList>
            <person name="Glass J.I."/>
            <person name="Lartigue C."/>
            <person name="Pfannkoch C."/>
            <person name="Baden-Tillson H."/>
            <person name="Smith H.O."/>
            <person name="Venter J.C."/>
            <person name="Roske K."/>
            <person name="Wise K.S."/>
            <person name="Calcutt M.J."/>
            <person name="Nelson W.C."/>
            <person name="Nierman W.C."/>
        </authorList>
    </citation>
    <scope>NUCLEOTIDE SEQUENCE [LARGE SCALE GENOMIC DNA]</scope>
    <source>
        <strain>California kid / ATCC 27343 / NCTC 10154</strain>
    </source>
</reference>
<accession>Q2SRU5</accession>
<comment type="similarity">
    <text evidence="1">Belongs to the bacterial ribosomal protein bS16 family.</text>
</comment>